<name>MNHD1_STAAM</name>
<organism>
    <name type="scientific">Staphylococcus aureus (strain Mu50 / ATCC 700699)</name>
    <dbReference type="NCBI Taxonomy" id="158878"/>
    <lineage>
        <taxon>Bacteria</taxon>
        <taxon>Bacillati</taxon>
        <taxon>Bacillota</taxon>
        <taxon>Bacilli</taxon>
        <taxon>Bacillales</taxon>
        <taxon>Staphylococcaceae</taxon>
        <taxon>Staphylococcus</taxon>
    </lineage>
</organism>
<keyword id="KW-0050">Antiport</keyword>
<keyword id="KW-1003">Cell membrane</keyword>
<keyword id="KW-0375">Hydrogen ion transport</keyword>
<keyword id="KW-0406">Ion transport</keyword>
<keyword id="KW-0472">Membrane</keyword>
<keyword id="KW-0915">Sodium</keyword>
<keyword id="KW-0739">Sodium transport</keyword>
<keyword id="KW-0812">Transmembrane</keyword>
<keyword id="KW-1133">Transmembrane helix</keyword>
<keyword id="KW-0813">Transport</keyword>
<feature type="chain" id="PRO_0000217077" description="Na(+)/H(+) antiporter subunit D1">
    <location>
        <begin position="1"/>
        <end position="498"/>
    </location>
</feature>
<feature type="transmembrane region" description="Helical" evidence="2">
    <location>
        <begin position="6"/>
        <end position="25"/>
    </location>
</feature>
<feature type="transmembrane region" description="Helical" evidence="2">
    <location>
        <begin position="32"/>
        <end position="54"/>
    </location>
</feature>
<feature type="transmembrane region" description="Helical" evidence="2">
    <location>
        <begin position="74"/>
        <end position="96"/>
    </location>
</feature>
<feature type="transmembrane region" description="Helical" evidence="2">
    <location>
        <begin position="109"/>
        <end position="126"/>
    </location>
</feature>
<feature type="transmembrane region" description="Helical" evidence="2">
    <location>
        <begin position="131"/>
        <end position="153"/>
    </location>
</feature>
<feature type="transmembrane region" description="Helical" evidence="2">
    <location>
        <begin position="165"/>
        <end position="187"/>
    </location>
</feature>
<feature type="transmembrane region" description="Helical" evidence="2">
    <location>
        <begin position="211"/>
        <end position="233"/>
    </location>
</feature>
<feature type="transmembrane region" description="Helical" evidence="2">
    <location>
        <begin position="238"/>
        <end position="260"/>
    </location>
</feature>
<feature type="transmembrane region" description="Helical" evidence="2">
    <location>
        <begin position="275"/>
        <end position="297"/>
    </location>
</feature>
<feature type="transmembrane region" description="Helical" evidence="2">
    <location>
        <begin position="304"/>
        <end position="323"/>
    </location>
</feature>
<feature type="transmembrane region" description="Helical" evidence="2">
    <location>
        <begin position="328"/>
        <end position="350"/>
    </location>
</feature>
<feature type="transmembrane region" description="Helical" evidence="2">
    <location>
        <begin position="371"/>
        <end position="393"/>
    </location>
</feature>
<feature type="transmembrane region" description="Helical" evidence="2">
    <location>
        <begin position="408"/>
        <end position="430"/>
    </location>
</feature>
<feature type="transmembrane region" description="Helical" evidence="2">
    <location>
        <begin position="451"/>
        <end position="470"/>
    </location>
</feature>
<proteinExistence type="inferred from homology"/>
<accession>P60684</accession>
<accession>Q9ZNG3</accession>
<protein>
    <recommendedName>
        <fullName>Na(+)/H(+) antiporter subunit D1</fullName>
    </recommendedName>
    <alternativeName>
        <fullName>Mnh complex subunit D1</fullName>
    </alternativeName>
</protein>
<gene>
    <name type="primary">mnhD1</name>
    <name type="ordered locus">SAV0949</name>
</gene>
<evidence type="ECO:0000250" key="1"/>
<evidence type="ECO:0000255" key="2"/>
<evidence type="ECO:0000305" key="3"/>
<sequence>MIESNMLVLTLVIPVITAILLVFIGKRPIIKRYVALGGTLLTLVAAIINLANVVKHGPIRVELGSWKAPYSIVFVLDIFSALLIITSIIITAIVILYSYQTIGIERERYYYYFSVLFMLIGIIGAFTTGDIFNLFVFFEVFLMSSYFLLVIGSTKIQLQETIKYVLVNVVSSSFFVMGVAILYSVVGTLNLADISNKLANLSAHDSGLVNIVFILFIFVFATKAGVFPMFVWLPSAYYAPPIPIIAFFGALLTKVGVYAIARTLSLFFSDNVSFSHYVILFLALLTIIFGCVGAVAYANIKKIILYNVMIAVGVILVGVAMMTESGMIGAIYYTLHDMLVKLALFLLIGIMIKITGTADLRQFGGLIKRYPVLGWSFFIAALSLAGIPPLSGFYGKFFIVQSTFERGFYLSGVIVLLSSLVVLYSVIRIFLQGFFGQPKGYDLNNKVDVKYLTTIAIVAVVITVLYGLSADYLYPMVKAGAETFYNPSTYVKAVLGGK</sequence>
<reference key="1">
    <citation type="journal article" date="2001" name="Lancet">
        <title>Whole genome sequencing of meticillin-resistant Staphylococcus aureus.</title>
        <authorList>
            <person name="Kuroda M."/>
            <person name="Ohta T."/>
            <person name="Uchiyama I."/>
            <person name="Baba T."/>
            <person name="Yuzawa H."/>
            <person name="Kobayashi I."/>
            <person name="Cui L."/>
            <person name="Oguchi A."/>
            <person name="Aoki K."/>
            <person name="Nagai Y."/>
            <person name="Lian J.-Q."/>
            <person name="Ito T."/>
            <person name="Kanamori M."/>
            <person name="Matsumaru H."/>
            <person name="Maruyama A."/>
            <person name="Murakami H."/>
            <person name="Hosoyama A."/>
            <person name="Mizutani-Ui Y."/>
            <person name="Takahashi N.K."/>
            <person name="Sawano T."/>
            <person name="Inoue R."/>
            <person name="Kaito C."/>
            <person name="Sekimizu K."/>
            <person name="Hirakawa H."/>
            <person name="Kuhara S."/>
            <person name="Goto S."/>
            <person name="Yabuzaki J."/>
            <person name="Kanehisa M."/>
            <person name="Yamashita A."/>
            <person name="Oshima K."/>
            <person name="Furuya K."/>
            <person name="Yoshino C."/>
            <person name="Shiba T."/>
            <person name="Hattori M."/>
            <person name="Ogasawara N."/>
            <person name="Hayashi H."/>
            <person name="Hiramatsu K."/>
        </authorList>
    </citation>
    <scope>NUCLEOTIDE SEQUENCE [LARGE SCALE GENOMIC DNA]</scope>
    <source>
        <strain>Mu50 / ATCC 700699</strain>
    </source>
</reference>
<dbReference type="EMBL" id="BA000017">
    <property type="protein sequence ID" value="BAB57111.1"/>
    <property type="molecule type" value="Genomic_DNA"/>
</dbReference>
<dbReference type="RefSeq" id="WP_000573077.1">
    <property type="nucleotide sequence ID" value="NC_002758.2"/>
</dbReference>
<dbReference type="SMR" id="P60684"/>
<dbReference type="KEGG" id="sav:SAV0949"/>
<dbReference type="HOGENOM" id="CLU_007100_9_2_9"/>
<dbReference type="PhylomeDB" id="P60684"/>
<dbReference type="Proteomes" id="UP000002481">
    <property type="component" value="Chromosome"/>
</dbReference>
<dbReference type="GO" id="GO:0005886">
    <property type="term" value="C:plasma membrane"/>
    <property type="evidence" value="ECO:0007669"/>
    <property type="project" value="UniProtKB-SubCell"/>
</dbReference>
<dbReference type="GO" id="GO:0008137">
    <property type="term" value="F:NADH dehydrogenase (ubiquinone) activity"/>
    <property type="evidence" value="ECO:0007669"/>
    <property type="project" value="InterPro"/>
</dbReference>
<dbReference type="GO" id="GO:0015386">
    <property type="term" value="F:potassium:proton antiporter activity"/>
    <property type="evidence" value="ECO:0007669"/>
    <property type="project" value="InterPro"/>
</dbReference>
<dbReference type="GO" id="GO:0042773">
    <property type="term" value="P:ATP synthesis coupled electron transport"/>
    <property type="evidence" value="ECO:0007669"/>
    <property type="project" value="InterPro"/>
</dbReference>
<dbReference type="GO" id="GO:0006814">
    <property type="term" value="P:sodium ion transport"/>
    <property type="evidence" value="ECO:0007669"/>
    <property type="project" value="UniProtKB-KW"/>
</dbReference>
<dbReference type="InterPro" id="IPR050586">
    <property type="entry name" value="CPA3_Na-H_Antiporter_D"/>
</dbReference>
<dbReference type="InterPro" id="IPR004775">
    <property type="entry name" value="MnhD1"/>
</dbReference>
<dbReference type="InterPro" id="IPR003918">
    <property type="entry name" value="NADH_UbQ_OxRdtase"/>
</dbReference>
<dbReference type="InterPro" id="IPR001750">
    <property type="entry name" value="ND/Mrp_TM"/>
</dbReference>
<dbReference type="NCBIfam" id="TIGR00944">
    <property type="entry name" value="2a6301s04"/>
    <property type="match status" value="1"/>
</dbReference>
<dbReference type="NCBIfam" id="NF005818">
    <property type="entry name" value="PRK07691.1"/>
    <property type="match status" value="1"/>
</dbReference>
<dbReference type="PANTHER" id="PTHR42703:SF1">
    <property type="entry name" value="NA(+)_H(+) ANTIPORTER SUBUNIT D1"/>
    <property type="match status" value="1"/>
</dbReference>
<dbReference type="PANTHER" id="PTHR42703">
    <property type="entry name" value="NADH DEHYDROGENASE"/>
    <property type="match status" value="1"/>
</dbReference>
<dbReference type="Pfam" id="PF00361">
    <property type="entry name" value="Proton_antipo_M"/>
    <property type="match status" value="1"/>
</dbReference>
<dbReference type="PRINTS" id="PR01437">
    <property type="entry name" value="NUOXDRDTASE4"/>
</dbReference>
<comment type="function">
    <text evidence="1">Mnh complex is a Na(+)/H(+) antiporter involved in Na(+) excretion.</text>
</comment>
<comment type="subunit">
    <text evidence="1">May form a heterooligomeric complex that consists of seven subunits: mnhA1, mnhB1, mnhC1, mnhD1, mnhE1, mnhF1 and mnhG1.</text>
</comment>
<comment type="subcellular location">
    <subcellularLocation>
        <location evidence="3">Cell membrane</location>
        <topology evidence="3">Multi-pass membrane protein</topology>
    </subcellularLocation>
</comment>
<comment type="similarity">
    <text evidence="3">Belongs to the CPA3 antiporters (TC 2.A.63) subunit D family.</text>
</comment>